<gene>
    <name evidence="2" type="primary">gyrB</name>
    <name type="ordered locus">SA0005</name>
</gene>
<organism>
    <name type="scientific">Staphylococcus aureus (strain N315)</name>
    <dbReference type="NCBI Taxonomy" id="158879"/>
    <lineage>
        <taxon>Bacteria</taxon>
        <taxon>Bacillati</taxon>
        <taxon>Bacillota</taxon>
        <taxon>Bacilli</taxon>
        <taxon>Bacillales</taxon>
        <taxon>Staphylococcaceae</taxon>
        <taxon>Staphylococcus</taxon>
    </lineage>
</organism>
<protein>
    <recommendedName>
        <fullName evidence="2">DNA gyrase subunit B</fullName>
        <ecNumber evidence="2">5.6.2.2</ecNumber>
    </recommendedName>
</protein>
<feature type="initiator methionine" description="Removed" evidence="1">
    <location>
        <position position="1"/>
    </location>
</feature>
<feature type="chain" id="PRO_0000145339" description="DNA gyrase subunit B">
    <location>
        <begin position="2"/>
        <end position="644"/>
    </location>
</feature>
<feature type="domain" description="Toprim" evidence="2">
    <location>
        <begin position="429"/>
        <end position="543"/>
    </location>
</feature>
<feature type="binding site" evidence="2">
    <location>
        <position position="435"/>
    </location>
    <ligand>
        <name>Mg(2+)</name>
        <dbReference type="ChEBI" id="CHEBI:18420"/>
        <label>1</label>
        <note>catalytic</note>
    </ligand>
</feature>
<feature type="binding site" evidence="2">
    <location>
        <position position="508"/>
    </location>
    <ligand>
        <name>Mg(2+)</name>
        <dbReference type="ChEBI" id="CHEBI:18420"/>
        <label>1</label>
        <note>catalytic</note>
    </ligand>
</feature>
<feature type="binding site" evidence="2">
    <location>
        <position position="508"/>
    </location>
    <ligand>
        <name>Mg(2+)</name>
        <dbReference type="ChEBI" id="CHEBI:18420"/>
        <label>2</label>
    </ligand>
</feature>
<feature type="binding site" evidence="2">
    <location>
        <position position="510"/>
    </location>
    <ligand>
        <name>Mg(2+)</name>
        <dbReference type="ChEBI" id="CHEBI:18420"/>
        <label>2</label>
    </ligand>
</feature>
<feature type="site" description="Interaction with DNA" evidence="2">
    <location>
        <position position="460"/>
    </location>
</feature>
<feature type="site" description="Interaction with DNA" evidence="2">
    <location>
        <position position="463"/>
    </location>
</feature>
<feature type="strand" evidence="3">
    <location>
        <begin position="415"/>
        <end position="419"/>
    </location>
</feature>
<feature type="helix" evidence="5">
    <location>
        <begin position="426"/>
        <end position="428"/>
    </location>
</feature>
<feature type="strand" evidence="5">
    <location>
        <begin position="430"/>
        <end position="436"/>
    </location>
</feature>
<feature type="helix" evidence="5">
    <location>
        <begin position="437"/>
        <end position="446"/>
    </location>
</feature>
<feature type="turn" evidence="5">
    <location>
        <begin position="449"/>
        <end position="451"/>
    </location>
</feature>
<feature type="strand" evidence="5">
    <location>
        <begin position="452"/>
        <end position="457"/>
    </location>
</feature>
<feature type="turn" evidence="4">
    <location>
        <begin position="459"/>
        <end position="461"/>
    </location>
</feature>
<feature type="turn" evidence="5">
    <location>
        <begin position="464"/>
        <end position="466"/>
    </location>
</feature>
<feature type="helix" evidence="5">
    <location>
        <begin position="469"/>
        <end position="473"/>
    </location>
</feature>
<feature type="helix" evidence="5">
    <location>
        <begin position="476"/>
        <end position="485"/>
    </location>
</feature>
<feature type="helix" evidence="5">
    <location>
        <begin position="490"/>
        <end position="492"/>
    </location>
</feature>
<feature type="helix" evidence="5">
    <location>
        <begin position="495"/>
        <end position="497"/>
    </location>
</feature>
<feature type="strand" evidence="5">
    <location>
        <begin position="501"/>
        <end position="506"/>
    </location>
</feature>
<feature type="helix" evidence="5">
    <location>
        <begin position="511"/>
        <end position="527"/>
    </location>
</feature>
<feature type="helix" evidence="5">
    <location>
        <begin position="529"/>
        <end position="533"/>
    </location>
</feature>
<feature type="strand" evidence="5">
    <location>
        <begin position="537"/>
        <end position="539"/>
    </location>
</feature>
<feature type="strand" evidence="4">
    <location>
        <begin position="545"/>
        <end position="547"/>
    </location>
</feature>
<feature type="strand" evidence="4">
    <location>
        <begin position="549"/>
        <end position="551"/>
    </location>
</feature>
<feature type="strand" evidence="4">
    <location>
        <begin position="554"/>
        <end position="556"/>
    </location>
</feature>
<feature type="helix" evidence="4">
    <location>
        <begin position="559"/>
        <end position="566"/>
    </location>
</feature>
<feature type="strand" evidence="4">
    <location>
        <begin position="577"/>
        <end position="579"/>
    </location>
</feature>
<feature type="helix" evidence="5">
    <location>
        <begin position="583"/>
        <end position="585"/>
    </location>
</feature>
<feature type="helix" evidence="5">
    <location>
        <begin position="588"/>
        <end position="595"/>
    </location>
</feature>
<feature type="turn" evidence="5">
    <location>
        <begin position="598"/>
        <end position="600"/>
    </location>
</feature>
<feature type="strand" evidence="5">
    <location>
        <begin position="604"/>
        <end position="607"/>
    </location>
</feature>
<feature type="helix" evidence="5">
    <location>
        <begin position="611"/>
        <end position="622"/>
    </location>
</feature>
<feature type="helix" evidence="5">
    <location>
        <begin position="626"/>
        <end position="636"/>
    </location>
</feature>
<feature type="helix" evidence="5">
    <location>
        <begin position="637"/>
        <end position="639"/>
    </location>
</feature>
<keyword id="KW-0002">3D-structure</keyword>
<keyword id="KW-0067">ATP-binding</keyword>
<keyword id="KW-0963">Cytoplasm</keyword>
<keyword id="KW-0238">DNA-binding</keyword>
<keyword id="KW-0413">Isomerase</keyword>
<keyword id="KW-0460">Magnesium</keyword>
<keyword id="KW-0479">Metal-binding</keyword>
<keyword id="KW-0547">Nucleotide-binding</keyword>
<keyword id="KW-0799">Topoisomerase</keyword>
<comment type="function">
    <text evidence="2">A type II topoisomerase that negatively supercoils closed circular double-stranded (ds) DNA in an ATP-dependent manner to modulate DNA topology and maintain chromosomes in an underwound state. Negative supercoiling favors strand separation, and DNA replication, transcription, recombination and repair, all of which involve strand separation. Also able to catalyze the interconversion of other topological isomers of dsDNA rings, including catenanes and knotted rings. Type II topoisomerases break and join 2 DNA strands simultaneously in an ATP-dependent manner.</text>
</comment>
<comment type="catalytic activity">
    <reaction evidence="2">
        <text>ATP-dependent breakage, passage and rejoining of double-stranded DNA.</text>
        <dbReference type="EC" id="5.6.2.2"/>
    </reaction>
</comment>
<comment type="cofactor">
    <cofactor evidence="2">
        <name>Mg(2+)</name>
        <dbReference type="ChEBI" id="CHEBI:18420"/>
    </cofactor>
    <cofactor evidence="2">
        <name>Mn(2+)</name>
        <dbReference type="ChEBI" id="CHEBI:29035"/>
    </cofactor>
    <cofactor evidence="2">
        <name>Ca(2+)</name>
        <dbReference type="ChEBI" id="CHEBI:29108"/>
    </cofactor>
    <text evidence="2">Binds two Mg(2+) per subunit. The magnesium ions form salt bridges with both the protein and the DNA. Can also accept other divalent metal cations, such as Mn(2+) or Ca(2+).</text>
</comment>
<comment type="subunit">
    <text evidence="2">Heterotetramer, composed of two GyrA and two GyrB chains. In the heterotetramer, GyrA contains the active site tyrosine that forms a transient covalent intermediate with DNA, while GyrB binds cofactors and catalyzes ATP hydrolysis.</text>
</comment>
<comment type="subcellular location">
    <subcellularLocation>
        <location evidence="2">Cytoplasm</location>
    </subcellularLocation>
</comment>
<comment type="miscellaneous">
    <text evidence="2">Few gyrases are as efficient as E.coli at forming negative supercoils. Not all organisms have 2 type II topoisomerases; in organisms with a single type II topoisomerase this enzyme also has to decatenate newly replicated chromosomes.</text>
</comment>
<comment type="similarity">
    <text evidence="2">Belongs to the type II topoisomerase GyrB family.</text>
</comment>
<proteinExistence type="evidence at protein level"/>
<accession>P66937</accession>
<accession>Q99XG6</accession>
<evidence type="ECO:0000250" key="1"/>
<evidence type="ECO:0000255" key="2">
    <source>
        <dbReference type="HAMAP-Rule" id="MF_01898"/>
    </source>
</evidence>
<evidence type="ECO:0007829" key="3">
    <source>
        <dbReference type="PDB" id="2XCO"/>
    </source>
</evidence>
<evidence type="ECO:0007829" key="4">
    <source>
        <dbReference type="PDB" id="2XCQ"/>
    </source>
</evidence>
<evidence type="ECO:0007829" key="5">
    <source>
        <dbReference type="PDB" id="5NPK"/>
    </source>
</evidence>
<sequence>MVTALSDVNNTDNYGAGQIQVLEGLEAVRKRPGMYIGSTSERGLHHLVWEIVDNSIDEALAGYANKIEVVIEKDNWIKVTDNGRGIPVDIQEKMGRPAVEVILTVLHAGGKFGGGGYKVSGGLHGVGSSVVNALSQDLEVYVHRNETIYHQAYKKGVPQFDLKEVGTTDKTGTVIRFKADGEIFTETTVYNYETLQQRIRELAFLNKGIQITLRDERDEENVREDSYHYEGGIKSYVELLNENKEPIHDEPIYIHQSKDDIEVEIAIQYNSGYATNLLTYANNIHTYEGGTHEDGFKRALTRVLNSYGLSSKIMKEEKDRLSGEDTREGMTAIISIKHGDPQFEGQTKTKLGNSEVRQVVDKLFSEHFERFLYENPQVARTVVEKGIMAARARVAAKKAREVTRRKSALDVASLPGKLADCSSKSPEECEIFLVEGDSAGGSTKSGRDSRTQAILPLRGKILNVEKARLDRILNNNEIRQMITAFGTGIGGDFDLAKARYHKIVIMTDADVDGAHIRTLLLTFFYRFMRPLIEAGYVYIAQPPLYKLTQGKQKYYVYNDRELDKLKSELNPTPKWSIARYKGLGEMNADQLWETTMNPEHRALLQVKLEDAIEADQTFEMLMGDVVENRRQFIEDNAVYANLDF</sequence>
<name>GYRB_STAAN</name>
<reference key="1">
    <citation type="journal article" date="2001" name="Lancet">
        <title>Whole genome sequencing of meticillin-resistant Staphylococcus aureus.</title>
        <authorList>
            <person name="Kuroda M."/>
            <person name="Ohta T."/>
            <person name="Uchiyama I."/>
            <person name="Baba T."/>
            <person name="Yuzawa H."/>
            <person name="Kobayashi I."/>
            <person name="Cui L."/>
            <person name="Oguchi A."/>
            <person name="Aoki K."/>
            <person name="Nagai Y."/>
            <person name="Lian J.-Q."/>
            <person name="Ito T."/>
            <person name="Kanamori M."/>
            <person name="Matsumaru H."/>
            <person name="Maruyama A."/>
            <person name="Murakami H."/>
            <person name="Hosoyama A."/>
            <person name="Mizutani-Ui Y."/>
            <person name="Takahashi N.K."/>
            <person name="Sawano T."/>
            <person name="Inoue R."/>
            <person name="Kaito C."/>
            <person name="Sekimizu K."/>
            <person name="Hirakawa H."/>
            <person name="Kuhara S."/>
            <person name="Goto S."/>
            <person name="Yabuzaki J."/>
            <person name="Kanehisa M."/>
            <person name="Yamashita A."/>
            <person name="Oshima K."/>
            <person name="Furuya K."/>
            <person name="Yoshino C."/>
            <person name="Shiba T."/>
            <person name="Hattori M."/>
            <person name="Ogasawara N."/>
            <person name="Hayashi H."/>
            <person name="Hiramatsu K."/>
        </authorList>
    </citation>
    <scope>NUCLEOTIDE SEQUENCE [LARGE SCALE GENOMIC DNA]</scope>
    <source>
        <strain>N315</strain>
    </source>
</reference>
<reference key="2">
    <citation type="submission" date="2007-10" db="UniProtKB">
        <title>Shotgun proteomic analysis of total and membrane protein extracts of S. aureus strain N315.</title>
        <authorList>
            <person name="Vaezzadeh A.R."/>
            <person name="Deshusses J."/>
            <person name="Lescuyer P."/>
            <person name="Hochstrasser D.F."/>
        </authorList>
    </citation>
    <scope>IDENTIFICATION BY MASS SPECTROMETRY [LARGE SCALE ANALYSIS]</scope>
    <source>
        <strain>N315</strain>
    </source>
</reference>
<dbReference type="EC" id="5.6.2.2" evidence="2"/>
<dbReference type="EMBL" id="BA000018">
    <property type="protein sequence ID" value="BAB41221.1"/>
    <property type="molecule type" value="Genomic_DNA"/>
</dbReference>
<dbReference type="PIR" id="E89758">
    <property type="entry name" value="E89758"/>
</dbReference>
<dbReference type="RefSeq" id="WP_000255578.1">
    <property type="nucleotide sequence ID" value="NC_002745.2"/>
</dbReference>
<dbReference type="PDB" id="2XCO">
    <property type="method" value="X-ray"/>
    <property type="resolution" value="3.10 A"/>
    <property type="chains" value="A=410-644"/>
</dbReference>
<dbReference type="PDB" id="2XCQ">
    <property type="method" value="X-ray"/>
    <property type="resolution" value="2.98 A"/>
    <property type="chains" value="A=410-644"/>
</dbReference>
<dbReference type="PDB" id="2XCR">
    <property type="method" value="X-ray"/>
    <property type="resolution" value="3.50 A"/>
    <property type="chains" value="B/D/S/U=410-644"/>
</dbReference>
<dbReference type="PDB" id="2XCS">
    <property type="method" value="X-ray"/>
    <property type="resolution" value="2.10 A"/>
    <property type="chains" value="B/D=410-543, B/D=580-644"/>
</dbReference>
<dbReference type="PDB" id="2XCT">
    <property type="method" value="X-ray"/>
    <property type="resolution" value="3.35 A"/>
    <property type="chains" value="B/D/S/U=410-543, B/D/S/U=580-644"/>
</dbReference>
<dbReference type="PDB" id="4BUL">
    <property type="method" value="X-ray"/>
    <property type="resolution" value="2.60 A"/>
    <property type="chains" value="A/C=410-543, A/C=580-644"/>
</dbReference>
<dbReference type="PDB" id="5CDM">
    <property type="method" value="X-ray"/>
    <property type="resolution" value="2.50 A"/>
    <property type="chains" value="B/D=416-543, B/D=580-639"/>
</dbReference>
<dbReference type="PDB" id="5CDN">
    <property type="method" value="X-ray"/>
    <property type="resolution" value="2.79 A"/>
    <property type="chains" value="B/D/S/U=417-543, B/D/S/U=580-639"/>
</dbReference>
<dbReference type="PDB" id="5CDO">
    <property type="method" value="X-ray"/>
    <property type="resolution" value="3.15 A"/>
    <property type="chains" value="B/D/S/U=417-543"/>
</dbReference>
<dbReference type="PDB" id="5CDP">
    <property type="method" value="X-ray"/>
    <property type="resolution" value="2.45 A"/>
    <property type="chains" value="B/D=417-543, B/D=580-640"/>
</dbReference>
<dbReference type="PDB" id="5CDQ">
    <property type="method" value="X-ray"/>
    <property type="resolution" value="2.95 A"/>
    <property type="chains" value="B/D/S/U=414-543"/>
</dbReference>
<dbReference type="PDB" id="5CDR">
    <property type="method" value="X-ray"/>
    <property type="resolution" value="2.65 A"/>
    <property type="chains" value="B/D=417-543, B/D=580-640"/>
</dbReference>
<dbReference type="PDB" id="5NPK">
    <property type="method" value="X-ray"/>
    <property type="resolution" value="1.98 A"/>
    <property type="chains" value="B/D/b/d=409-543, B/D/b/d=580-642"/>
</dbReference>
<dbReference type="PDB" id="5NPP">
    <property type="method" value="X-ray"/>
    <property type="resolution" value="2.22 A"/>
    <property type="chains" value="B/D=409-543, B/D=580-642"/>
</dbReference>
<dbReference type="PDB" id="6FM4">
    <property type="method" value="X-ray"/>
    <property type="resolution" value="2.70 A"/>
    <property type="chains" value="B/D=409-543, B/D=580-644"/>
</dbReference>
<dbReference type="PDB" id="6FQS">
    <property type="method" value="X-ray"/>
    <property type="resolution" value="3.11 A"/>
    <property type="chains" value="B/D=409-543, B/D=580-644"/>
</dbReference>
<dbReference type="PDB" id="6FQV">
    <property type="method" value="X-ray"/>
    <property type="resolution" value="2.60 A"/>
    <property type="chains" value="B/D/S/U=409-543, B/D/S/U=580-644"/>
</dbReference>
<dbReference type="PDB" id="7FVS">
    <property type="method" value="X-ray"/>
    <property type="resolution" value="2.16 A"/>
    <property type="chains" value="A/B=409-644"/>
</dbReference>
<dbReference type="PDB" id="7FVT">
    <property type="method" value="X-ray"/>
    <property type="resolution" value="2.08 A"/>
    <property type="chains" value="A/B=409-644"/>
</dbReference>
<dbReference type="PDB" id="8BP2">
    <property type="method" value="X-ray"/>
    <property type="resolution" value="2.80 A"/>
    <property type="chains" value="BBB/DDD=417-543, BBB/DDD=580-639"/>
</dbReference>
<dbReference type="PDBsum" id="2XCO"/>
<dbReference type="PDBsum" id="2XCQ"/>
<dbReference type="PDBsum" id="2XCR"/>
<dbReference type="PDBsum" id="2XCS"/>
<dbReference type="PDBsum" id="2XCT"/>
<dbReference type="PDBsum" id="4BUL"/>
<dbReference type="PDBsum" id="5CDM"/>
<dbReference type="PDBsum" id="5CDN"/>
<dbReference type="PDBsum" id="5CDO"/>
<dbReference type="PDBsum" id="5CDP"/>
<dbReference type="PDBsum" id="5CDQ"/>
<dbReference type="PDBsum" id="5CDR"/>
<dbReference type="PDBsum" id="5NPK"/>
<dbReference type="PDBsum" id="5NPP"/>
<dbReference type="PDBsum" id="6FM4"/>
<dbReference type="PDBsum" id="6FQS"/>
<dbReference type="PDBsum" id="6FQV"/>
<dbReference type="PDBsum" id="7FVS"/>
<dbReference type="PDBsum" id="7FVT"/>
<dbReference type="PDBsum" id="8BP2"/>
<dbReference type="BMRB" id="P66937"/>
<dbReference type="SMR" id="P66937"/>
<dbReference type="EnsemblBacteria" id="BAB41221">
    <property type="protein sequence ID" value="BAB41221"/>
    <property type="gene ID" value="BAB41221"/>
</dbReference>
<dbReference type="KEGG" id="sau:SA0005"/>
<dbReference type="HOGENOM" id="CLU_006146_1_2_9"/>
<dbReference type="BRENDA" id="5.6.2.2">
    <property type="organism ID" value="3352"/>
</dbReference>
<dbReference type="EvolutionaryTrace" id="P66937"/>
<dbReference type="GO" id="GO:0005694">
    <property type="term" value="C:chromosome"/>
    <property type="evidence" value="ECO:0007669"/>
    <property type="project" value="InterPro"/>
</dbReference>
<dbReference type="GO" id="GO:0005737">
    <property type="term" value="C:cytoplasm"/>
    <property type="evidence" value="ECO:0007669"/>
    <property type="project" value="UniProtKB-SubCell"/>
</dbReference>
<dbReference type="GO" id="GO:0005524">
    <property type="term" value="F:ATP binding"/>
    <property type="evidence" value="ECO:0007669"/>
    <property type="project" value="UniProtKB-UniRule"/>
</dbReference>
<dbReference type="GO" id="GO:0003677">
    <property type="term" value="F:DNA binding"/>
    <property type="evidence" value="ECO:0007669"/>
    <property type="project" value="UniProtKB-KW"/>
</dbReference>
<dbReference type="GO" id="GO:0034335">
    <property type="term" value="F:DNA negative supercoiling activity"/>
    <property type="evidence" value="ECO:0007669"/>
    <property type="project" value="UniProtKB-ARBA"/>
</dbReference>
<dbReference type="GO" id="GO:0046872">
    <property type="term" value="F:metal ion binding"/>
    <property type="evidence" value="ECO:0007669"/>
    <property type="project" value="UniProtKB-KW"/>
</dbReference>
<dbReference type="GO" id="GO:0006265">
    <property type="term" value="P:DNA topological change"/>
    <property type="evidence" value="ECO:0007669"/>
    <property type="project" value="UniProtKB-UniRule"/>
</dbReference>
<dbReference type="GO" id="GO:0006261">
    <property type="term" value="P:DNA-templated DNA replication"/>
    <property type="evidence" value="ECO:0007669"/>
    <property type="project" value="UniProtKB-UniRule"/>
</dbReference>
<dbReference type="CDD" id="cd16928">
    <property type="entry name" value="HATPase_GyrB-like"/>
    <property type="match status" value="1"/>
</dbReference>
<dbReference type="CDD" id="cd00822">
    <property type="entry name" value="TopoII_Trans_DNA_gyrase"/>
    <property type="match status" value="1"/>
</dbReference>
<dbReference type="CDD" id="cd03366">
    <property type="entry name" value="TOPRIM_TopoIIA_GyrB"/>
    <property type="match status" value="1"/>
</dbReference>
<dbReference type="FunFam" id="3.30.230.10:FF:000005">
    <property type="entry name" value="DNA gyrase subunit B"/>
    <property type="match status" value="1"/>
</dbReference>
<dbReference type="FunFam" id="3.30.565.10:FF:000002">
    <property type="entry name" value="DNA gyrase subunit B"/>
    <property type="match status" value="1"/>
</dbReference>
<dbReference type="FunFam" id="3.40.50.670:FF:000002">
    <property type="entry name" value="DNA gyrase subunit B"/>
    <property type="match status" value="1"/>
</dbReference>
<dbReference type="Gene3D" id="3.30.230.10">
    <property type="match status" value="1"/>
</dbReference>
<dbReference type="Gene3D" id="3.40.50.670">
    <property type="match status" value="1"/>
</dbReference>
<dbReference type="Gene3D" id="3.30.565.10">
    <property type="entry name" value="Histidine kinase-like ATPase, C-terminal domain"/>
    <property type="match status" value="1"/>
</dbReference>
<dbReference type="HAMAP" id="MF_01898">
    <property type="entry name" value="GyrB"/>
    <property type="match status" value="1"/>
</dbReference>
<dbReference type="InterPro" id="IPR002288">
    <property type="entry name" value="DNA_gyrase_B_C"/>
</dbReference>
<dbReference type="InterPro" id="IPR011557">
    <property type="entry name" value="GyrB"/>
</dbReference>
<dbReference type="InterPro" id="IPR036890">
    <property type="entry name" value="HATPase_C_sf"/>
</dbReference>
<dbReference type="InterPro" id="IPR020568">
    <property type="entry name" value="Ribosomal_Su5_D2-typ_SF"/>
</dbReference>
<dbReference type="InterPro" id="IPR014721">
    <property type="entry name" value="Ribsml_uS5_D2-typ_fold_subgr"/>
</dbReference>
<dbReference type="InterPro" id="IPR001241">
    <property type="entry name" value="Topo_IIA"/>
</dbReference>
<dbReference type="InterPro" id="IPR013760">
    <property type="entry name" value="Topo_IIA-like_dom_sf"/>
</dbReference>
<dbReference type="InterPro" id="IPR000565">
    <property type="entry name" value="Topo_IIA_B"/>
</dbReference>
<dbReference type="InterPro" id="IPR013759">
    <property type="entry name" value="Topo_IIA_B_C"/>
</dbReference>
<dbReference type="InterPro" id="IPR013506">
    <property type="entry name" value="Topo_IIA_bsu_dom2"/>
</dbReference>
<dbReference type="InterPro" id="IPR018522">
    <property type="entry name" value="TopoIIA_CS"/>
</dbReference>
<dbReference type="InterPro" id="IPR006171">
    <property type="entry name" value="TOPRIM_dom"/>
</dbReference>
<dbReference type="InterPro" id="IPR034160">
    <property type="entry name" value="TOPRIM_GyrB"/>
</dbReference>
<dbReference type="NCBIfam" id="TIGR01059">
    <property type="entry name" value="gyrB"/>
    <property type="match status" value="1"/>
</dbReference>
<dbReference type="NCBIfam" id="NF004189">
    <property type="entry name" value="PRK05644.1"/>
    <property type="match status" value="1"/>
</dbReference>
<dbReference type="NCBIfam" id="NF011501">
    <property type="entry name" value="PRK14939.1"/>
    <property type="match status" value="1"/>
</dbReference>
<dbReference type="PANTHER" id="PTHR45866:SF1">
    <property type="entry name" value="DNA GYRASE SUBUNIT B, MITOCHONDRIAL"/>
    <property type="match status" value="1"/>
</dbReference>
<dbReference type="PANTHER" id="PTHR45866">
    <property type="entry name" value="DNA GYRASE/TOPOISOMERASE SUBUNIT B"/>
    <property type="match status" value="1"/>
</dbReference>
<dbReference type="Pfam" id="PF00204">
    <property type="entry name" value="DNA_gyraseB"/>
    <property type="match status" value="1"/>
</dbReference>
<dbReference type="Pfam" id="PF00986">
    <property type="entry name" value="DNA_gyraseB_C"/>
    <property type="match status" value="1"/>
</dbReference>
<dbReference type="Pfam" id="PF02518">
    <property type="entry name" value="HATPase_c"/>
    <property type="match status" value="1"/>
</dbReference>
<dbReference type="Pfam" id="PF01751">
    <property type="entry name" value="Toprim"/>
    <property type="match status" value="1"/>
</dbReference>
<dbReference type="PRINTS" id="PR01159">
    <property type="entry name" value="DNAGYRASEB"/>
</dbReference>
<dbReference type="PRINTS" id="PR00418">
    <property type="entry name" value="TPI2FAMILY"/>
</dbReference>
<dbReference type="SMART" id="SM00387">
    <property type="entry name" value="HATPase_c"/>
    <property type="match status" value="1"/>
</dbReference>
<dbReference type="SMART" id="SM00433">
    <property type="entry name" value="TOP2c"/>
    <property type="match status" value="1"/>
</dbReference>
<dbReference type="SUPFAM" id="SSF55874">
    <property type="entry name" value="ATPase domain of HSP90 chaperone/DNA topoisomerase II/histidine kinase"/>
    <property type="match status" value="1"/>
</dbReference>
<dbReference type="SUPFAM" id="SSF54211">
    <property type="entry name" value="Ribosomal protein S5 domain 2-like"/>
    <property type="match status" value="1"/>
</dbReference>
<dbReference type="SUPFAM" id="SSF56719">
    <property type="entry name" value="Type II DNA topoisomerase"/>
    <property type="match status" value="1"/>
</dbReference>
<dbReference type="PROSITE" id="PS00177">
    <property type="entry name" value="TOPOISOMERASE_II"/>
    <property type="match status" value="1"/>
</dbReference>
<dbReference type="PROSITE" id="PS50880">
    <property type="entry name" value="TOPRIM"/>
    <property type="match status" value="1"/>
</dbReference>